<proteinExistence type="inferred from homology"/>
<protein>
    <recommendedName>
        <fullName evidence="1">DNA ligase</fullName>
        <ecNumber evidence="1">6.5.1.2</ecNumber>
    </recommendedName>
    <alternativeName>
        <fullName evidence="1">Polydeoxyribonucleotide synthase [NAD(+)]</fullName>
    </alternativeName>
</protein>
<sequence length="667" mass="75314">MTIIDASERIAQLRQEIERHNYLYFNEAKPELSDYEFDKLLEELMALEREFPDLLTPDSPSQRVGGTITKEFPVVTHREPMLSLANTYSAGEVAEFYNRVAKLLAAENVHKQEMVAELKFDGVAISLLYRDGVLVRGATRGDGVQGDDITPNIRTIASIPLRLHQPLAGEVEVRGEIFMRKEDFEQLNDNRPEEERFANPRNATAGTLKLQDSAEVARRRMNFVAYYLKGLKDETLDHVSRLHKLEALGFTTGGHYRRCKTIEEINTFINEWEEKRWKLPYETDGVVLKLNNVQLWEQLGATAKSPRWAIAYKYPAQQARTQLCNVVFQVGRIGTITPVAELTPVLLAGSTVSRSTLHNFDEIERLSVMILDYVMIEKSGEVIPKVVRTLPDERPADAHAIAIPTHCPECDTPLIKPENEVSWYCPNEEHCPAQIRGRLLHFASRNAMDIKGLGDALVEQLVAWGLVHDVGDLYLLQEPQLERMERMGKKSAQNLIRALDESRTRSYDRLLYALGIRHVGRATARELAHAFPTLDALMQANEERLAEVPDIGTTVAQSIVDFFAKPSSRQLVDKLREARLQLAASASKIEQVNRNFEGMSLLFTGTLERYTRQQAAELVVERGGRVVESISKKTSLLVAGRDGGSKLDKAHKLGVRVISEDEFMGMM</sequence>
<feature type="chain" id="PRO_0000313185" description="DNA ligase">
    <location>
        <begin position="1"/>
        <end position="667"/>
    </location>
</feature>
<feature type="domain" description="BRCT" evidence="1">
    <location>
        <begin position="591"/>
        <end position="667"/>
    </location>
</feature>
<feature type="active site" description="N6-AMP-lysine intermediate" evidence="1">
    <location>
        <position position="119"/>
    </location>
</feature>
<feature type="binding site" evidence="1">
    <location>
        <begin position="34"/>
        <end position="38"/>
    </location>
    <ligand>
        <name>NAD(+)</name>
        <dbReference type="ChEBI" id="CHEBI:57540"/>
    </ligand>
</feature>
<feature type="binding site" evidence="1">
    <location>
        <begin position="83"/>
        <end position="84"/>
    </location>
    <ligand>
        <name>NAD(+)</name>
        <dbReference type="ChEBI" id="CHEBI:57540"/>
    </ligand>
</feature>
<feature type="binding site" evidence="1">
    <location>
        <position position="117"/>
    </location>
    <ligand>
        <name>NAD(+)</name>
        <dbReference type="ChEBI" id="CHEBI:57540"/>
    </ligand>
</feature>
<feature type="binding site" evidence="1">
    <location>
        <position position="140"/>
    </location>
    <ligand>
        <name>NAD(+)</name>
        <dbReference type="ChEBI" id="CHEBI:57540"/>
    </ligand>
</feature>
<feature type="binding site" evidence="1">
    <location>
        <position position="176"/>
    </location>
    <ligand>
        <name>NAD(+)</name>
        <dbReference type="ChEBI" id="CHEBI:57540"/>
    </ligand>
</feature>
<feature type="binding site" evidence="1">
    <location>
        <position position="289"/>
    </location>
    <ligand>
        <name>NAD(+)</name>
        <dbReference type="ChEBI" id="CHEBI:57540"/>
    </ligand>
</feature>
<feature type="binding site" evidence="1">
    <location>
        <position position="313"/>
    </location>
    <ligand>
        <name>NAD(+)</name>
        <dbReference type="ChEBI" id="CHEBI:57540"/>
    </ligand>
</feature>
<feature type="binding site" evidence="1">
    <location>
        <position position="407"/>
    </location>
    <ligand>
        <name>Zn(2+)</name>
        <dbReference type="ChEBI" id="CHEBI:29105"/>
    </ligand>
</feature>
<feature type="binding site" evidence="1">
    <location>
        <position position="410"/>
    </location>
    <ligand>
        <name>Zn(2+)</name>
        <dbReference type="ChEBI" id="CHEBI:29105"/>
    </ligand>
</feature>
<feature type="binding site" evidence="1">
    <location>
        <position position="425"/>
    </location>
    <ligand>
        <name>Zn(2+)</name>
        <dbReference type="ChEBI" id="CHEBI:29105"/>
    </ligand>
</feature>
<feature type="binding site" evidence="1">
    <location>
        <position position="431"/>
    </location>
    <ligand>
        <name>Zn(2+)</name>
        <dbReference type="ChEBI" id="CHEBI:29105"/>
    </ligand>
</feature>
<gene>
    <name evidence="1" type="primary">ligA</name>
    <name type="ordered locus">Cag_0275</name>
</gene>
<dbReference type="EC" id="6.5.1.2" evidence="1"/>
<dbReference type="EMBL" id="CP000108">
    <property type="protein sequence ID" value="ABB27551.1"/>
    <property type="molecule type" value="Genomic_DNA"/>
</dbReference>
<dbReference type="SMR" id="Q3ATX4"/>
<dbReference type="STRING" id="340177.Cag_0275"/>
<dbReference type="KEGG" id="cch:Cag_0275"/>
<dbReference type="eggNOG" id="COG0272">
    <property type="taxonomic scope" value="Bacteria"/>
</dbReference>
<dbReference type="HOGENOM" id="CLU_007764_2_1_10"/>
<dbReference type="OrthoDB" id="9759736at2"/>
<dbReference type="GO" id="GO:0005829">
    <property type="term" value="C:cytosol"/>
    <property type="evidence" value="ECO:0007669"/>
    <property type="project" value="TreeGrafter"/>
</dbReference>
<dbReference type="GO" id="GO:0003677">
    <property type="term" value="F:DNA binding"/>
    <property type="evidence" value="ECO:0007669"/>
    <property type="project" value="InterPro"/>
</dbReference>
<dbReference type="GO" id="GO:0003911">
    <property type="term" value="F:DNA ligase (NAD+) activity"/>
    <property type="evidence" value="ECO:0007669"/>
    <property type="project" value="UniProtKB-UniRule"/>
</dbReference>
<dbReference type="GO" id="GO:0046872">
    <property type="term" value="F:metal ion binding"/>
    <property type="evidence" value="ECO:0007669"/>
    <property type="project" value="UniProtKB-KW"/>
</dbReference>
<dbReference type="GO" id="GO:0006281">
    <property type="term" value="P:DNA repair"/>
    <property type="evidence" value="ECO:0007669"/>
    <property type="project" value="UniProtKB-KW"/>
</dbReference>
<dbReference type="GO" id="GO:0006260">
    <property type="term" value="P:DNA replication"/>
    <property type="evidence" value="ECO:0007669"/>
    <property type="project" value="UniProtKB-KW"/>
</dbReference>
<dbReference type="CDD" id="cd17748">
    <property type="entry name" value="BRCT_DNA_ligase_like"/>
    <property type="match status" value="1"/>
</dbReference>
<dbReference type="CDD" id="cd00114">
    <property type="entry name" value="LIGANc"/>
    <property type="match status" value="1"/>
</dbReference>
<dbReference type="FunFam" id="1.10.150.20:FF:000006">
    <property type="entry name" value="DNA ligase"/>
    <property type="match status" value="1"/>
</dbReference>
<dbReference type="FunFam" id="1.10.150.20:FF:000007">
    <property type="entry name" value="DNA ligase"/>
    <property type="match status" value="1"/>
</dbReference>
<dbReference type="FunFam" id="3.30.470.30:FF:000001">
    <property type="entry name" value="DNA ligase"/>
    <property type="match status" value="1"/>
</dbReference>
<dbReference type="Gene3D" id="6.20.10.30">
    <property type="match status" value="1"/>
</dbReference>
<dbReference type="Gene3D" id="1.10.150.20">
    <property type="entry name" value="5' to 3' exonuclease, C-terminal subdomain"/>
    <property type="match status" value="2"/>
</dbReference>
<dbReference type="Gene3D" id="3.40.50.10190">
    <property type="entry name" value="BRCT domain"/>
    <property type="match status" value="1"/>
</dbReference>
<dbReference type="Gene3D" id="3.30.470.30">
    <property type="entry name" value="DNA ligase/mRNA capping enzyme"/>
    <property type="match status" value="1"/>
</dbReference>
<dbReference type="Gene3D" id="1.10.287.610">
    <property type="entry name" value="Helix hairpin bin"/>
    <property type="match status" value="1"/>
</dbReference>
<dbReference type="Gene3D" id="2.40.50.140">
    <property type="entry name" value="Nucleic acid-binding proteins"/>
    <property type="match status" value="1"/>
</dbReference>
<dbReference type="HAMAP" id="MF_01588">
    <property type="entry name" value="DNA_ligase_A"/>
    <property type="match status" value="1"/>
</dbReference>
<dbReference type="InterPro" id="IPR001357">
    <property type="entry name" value="BRCT_dom"/>
</dbReference>
<dbReference type="InterPro" id="IPR036420">
    <property type="entry name" value="BRCT_dom_sf"/>
</dbReference>
<dbReference type="InterPro" id="IPR041663">
    <property type="entry name" value="DisA/LigA_HHH"/>
</dbReference>
<dbReference type="InterPro" id="IPR001679">
    <property type="entry name" value="DNA_ligase"/>
</dbReference>
<dbReference type="InterPro" id="IPR018239">
    <property type="entry name" value="DNA_ligase_AS"/>
</dbReference>
<dbReference type="InterPro" id="IPR013839">
    <property type="entry name" value="DNAligase_adenylation"/>
</dbReference>
<dbReference type="InterPro" id="IPR013840">
    <property type="entry name" value="DNAligase_N"/>
</dbReference>
<dbReference type="InterPro" id="IPR003583">
    <property type="entry name" value="Hlx-hairpin-Hlx_DNA-bd_motif"/>
</dbReference>
<dbReference type="InterPro" id="IPR012340">
    <property type="entry name" value="NA-bd_OB-fold"/>
</dbReference>
<dbReference type="InterPro" id="IPR004150">
    <property type="entry name" value="NAD_DNA_ligase_OB"/>
</dbReference>
<dbReference type="InterPro" id="IPR010994">
    <property type="entry name" value="RuvA_2-like"/>
</dbReference>
<dbReference type="InterPro" id="IPR004149">
    <property type="entry name" value="Znf_DNAligase_C4"/>
</dbReference>
<dbReference type="NCBIfam" id="TIGR00575">
    <property type="entry name" value="dnlj"/>
    <property type="match status" value="1"/>
</dbReference>
<dbReference type="NCBIfam" id="NF005932">
    <property type="entry name" value="PRK07956.1"/>
    <property type="match status" value="1"/>
</dbReference>
<dbReference type="PANTHER" id="PTHR23389">
    <property type="entry name" value="CHROMOSOME TRANSMISSION FIDELITY FACTOR 18"/>
    <property type="match status" value="1"/>
</dbReference>
<dbReference type="PANTHER" id="PTHR23389:SF9">
    <property type="entry name" value="DNA LIGASE"/>
    <property type="match status" value="1"/>
</dbReference>
<dbReference type="Pfam" id="PF00533">
    <property type="entry name" value="BRCT"/>
    <property type="match status" value="1"/>
</dbReference>
<dbReference type="Pfam" id="PF01653">
    <property type="entry name" value="DNA_ligase_aden"/>
    <property type="match status" value="1"/>
</dbReference>
<dbReference type="Pfam" id="PF03120">
    <property type="entry name" value="DNA_ligase_OB"/>
    <property type="match status" value="1"/>
</dbReference>
<dbReference type="Pfam" id="PF03119">
    <property type="entry name" value="DNA_ligase_ZBD"/>
    <property type="match status" value="1"/>
</dbReference>
<dbReference type="Pfam" id="PF12826">
    <property type="entry name" value="HHH_2"/>
    <property type="match status" value="1"/>
</dbReference>
<dbReference type="Pfam" id="PF14520">
    <property type="entry name" value="HHH_5"/>
    <property type="match status" value="1"/>
</dbReference>
<dbReference type="Pfam" id="PF22745">
    <property type="entry name" value="Nlig-Ia"/>
    <property type="match status" value="1"/>
</dbReference>
<dbReference type="PIRSF" id="PIRSF001604">
    <property type="entry name" value="LigA"/>
    <property type="match status" value="1"/>
</dbReference>
<dbReference type="SMART" id="SM00292">
    <property type="entry name" value="BRCT"/>
    <property type="match status" value="1"/>
</dbReference>
<dbReference type="SMART" id="SM00278">
    <property type="entry name" value="HhH1"/>
    <property type="match status" value="4"/>
</dbReference>
<dbReference type="SMART" id="SM00532">
    <property type="entry name" value="LIGANc"/>
    <property type="match status" value="1"/>
</dbReference>
<dbReference type="SUPFAM" id="SSF52113">
    <property type="entry name" value="BRCT domain"/>
    <property type="match status" value="1"/>
</dbReference>
<dbReference type="SUPFAM" id="SSF56091">
    <property type="entry name" value="DNA ligase/mRNA capping enzyme, catalytic domain"/>
    <property type="match status" value="1"/>
</dbReference>
<dbReference type="SUPFAM" id="SSF50249">
    <property type="entry name" value="Nucleic acid-binding proteins"/>
    <property type="match status" value="1"/>
</dbReference>
<dbReference type="SUPFAM" id="SSF47781">
    <property type="entry name" value="RuvA domain 2-like"/>
    <property type="match status" value="1"/>
</dbReference>
<dbReference type="PROSITE" id="PS50172">
    <property type="entry name" value="BRCT"/>
    <property type="match status" value="1"/>
</dbReference>
<dbReference type="PROSITE" id="PS01055">
    <property type="entry name" value="DNA_LIGASE_N1"/>
    <property type="match status" value="1"/>
</dbReference>
<organism>
    <name type="scientific">Chlorobium chlorochromatii (strain CaD3)</name>
    <dbReference type="NCBI Taxonomy" id="340177"/>
    <lineage>
        <taxon>Bacteria</taxon>
        <taxon>Pseudomonadati</taxon>
        <taxon>Chlorobiota</taxon>
        <taxon>Chlorobiia</taxon>
        <taxon>Chlorobiales</taxon>
        <taxon>Chlorobiaceae</taxon>
        <taxon>Chlorobium/Pelodictyon group</taxon>
        <taxon>Chlorobium</taxon>
    </lineage>
</organism>
<name>DNLJ_CHLCH</name>
<keyword id="KW-0227">DNA damage</keyword>
<keyword id="KW-0234">DNA repair</keyword>
<keyword id="KW-0235">DNA replication</keyword>
<keyword id="KW-0436">Ligase</keyword>
<keyword id="KW-0460">Magnesium</keyword>
<keyword id="KW-0464">Manganese</keyword>
<keyword id="KW-0479">Metal-binding</keyword>
<keyword id="KW-0520">NAD</keyword>
<keyword id="KW-0862">Zinc</keyword>
<accession>Q3ATX4</accession>
<reference key="1">
    <citation type="submission" date="2005-08" db="EMBL/GenBank/DDBJ databases">
        <title>Complete sequence of Chlorobium chlorochromatii CaD3.</title>
        <authorList>
            <consortium name="US DOE Joint Genome Institute"/>
            <person name="Copeland A."/>
            <person name="Lucas S."/>
            <person name="Lapidus A."/>
            <person name="Barry K."/>
            <person name="Detter J.C."/>
            <person name="Glavina T."/>
            <person name="Hammon N."/>
            <person name="Israni S."/>
            <person name="Pitluck S."/>
            <person name="Bryant D."/>
            <person name="Schmutz J."/>
            <person name="Larimer F."/>
            <person name="Land M."/>
            <person name="Kyrpides N."/>
            <person name="Ivanova N."/>
            <person name="Richardson P."/>
        </authorList>
    </citation>
    <scope>NUCLEOTIDE SEQUENCE [LARGE SCALE GENOMIC DNA]</scope>
    <source>
        <strain>CaD3</strain>
    </source>
</reference>
<evidence type="ECO:0000255" key="1">
    <source>
        <dbReference type="HAMAP-Rule" id="MF_01588"/>
    </source>
</evidence>
<comment type="function">
    <text evidence="1">DNA ligase that catalyzes the formation of phosphodiester linkages between 5'-phosphoryl and 3'-hydroxyl groups in double-stranded DNA using NAD as a coenzyme and as the energy source for the reaction. It is essential for DNA replication and repair of damaged DNA.</text>
</comment>
<comment type="catalytic activity">
    <reaction evidence="1">
        <text>NAD(+) + (deoxyribonucleotide)n-3'-hydroxyl + 5'-phospho-(deoxyribonucleotide)m = (deoxyribonucleotide)n+m + AMP + beta-nicotinamide D-nucleotide.</text>
        <dbReference type="EC" id="6.5.1.2"/>
    </reaction>
</comment>
<comment type="cofactor">
    <cofactor evidence="1">
        <name>Mg(2+)</name>
        <dbReference type="ChEBI" id="CHEBI:18420"/>
    </cofactor>
    <cofactor evidence="1">
        <name>Mn(2+)</name>
        <dbReference type="ChEBI" id="CHEBI:29035"/>
    </cofactor>
</comment>
<comment type="similarity">
    <text evidence="1">Belongs to the NAD-dependent DNA ligase family. LigA subfamily.</text>
</comment>